<dbReference type="EMBL" id="AK129180">
    <property type="protein sequence ID" value="BAC97990.1"/>
    <property type="status" value="ALT_INIT"/>
    <property type="molecule type" value="Transcribed_RNA"/>
</dbReference>
<dbReference type="EMBL" id="AC108773">
    <property type="status" value="NOT_ANNOTATED_CDS"/>
    <property type="molecule type" value="Genomic_DNA"/>
</dbReference>
<dbReference type="EMBL" id="AC122203">
    <property type="status" value="NOT_ANNOTATED_CDS"/>
    <property type="molecule type" value="Genomic_DNA"/>
</dbReference>
<dbReference type="CCDS" id="CCDS51463.1">
    <molecule id="P61460-1"/>
</dbReference>
<dbReference type="RefSeq" id="NP_001164038.1">
    <molecule id="P61460-1"/>
    <property type="nucleotide sequence ID" value="NM_001170567.2"/>
</dbReference>
<dbReference type="RefSeq" id="NP_001391242.1">
    <molecule id="P61460-1"/>
    <property type="nucleotide sequence ID" value="NM_001404313.1"/>
</dbReference>
<dbReference type="RefSeq" id="NP_001391248.1">
    <molecule id="P61460-2"/>
    <property type="nucleotide sequence ID" value="NM_001404319.1"/>
</dbReference>
<dbReference type="RefSeq" id="NP_001391249.1">
    <molecule id="P61460-2"/>
    <property type="nucleotide sequence ID" value="NM_001404320.1"/>
</dbReference>
<dbReference type="RefSeq" id="XP_006504047.1">
    <molecule id="P61460-1"/>
    <property type="nucleotide sequence ID" value="XM_006503984.4"/>
</dbReference>
<dbReference type="RefSeq" id="XP_006504050.1">
    <molecule id="P61460-2"/>
    <property type="nucleotide sequence ID" value="XM_006503987.4"/>
</dbReference>
<dbReference type="RefSeq" id="XP_030110410.1">
    <molecule id="P61460-1"/>
    <property type="nucleotide sequence ID" value="XM_030254550.1"/>
</dbReference>
<dbReference type="SMR" id="P61460"/>
<dbReference type="BioGRID" id="234959">
    <property type="interactions" value="4"/>
</dbReference>
<dbReference type="FunCoup" id="P61460">
    <property type="interactions" value="2921"/>
</dbReference>
<dbReference type="IntAct" id="P61460">
    <property type="interactions" value="1"/>
</dbReference>
<dbReference type="STRING" id="10090.ENSMUSP00000113862"/>
<dbReference type="GlyGen" id="P61460">
    <property type="glycosylation" value="2 sites, 1 O-linked glycan (2 sites)"/>
</dbReference>
<dbReference type="iPTMnet" id="P61460"/>
<dbReference type="PhosphoSitePlus" id="P61460"/>
<dbReference type="PaxDb" id="10090-ENSMUSP00000113862"/>
<dbReference type="ProteomicsDB" id="279513">
    <molecule id="P61460-1"/>
</dbReference>
<dbReference type="ProteomicsDB" id="279514">
    <molecule id="P61460-2"/>
</dbReference>
<dbReference type="Pumba" id="P61460"/>
<dbReference type="ABCD" id="P61460">
    <property type="antibodies" value="1 sequenced antibody"/>
</dbReference>
<dbReference type="DNASU" id="277854"/>
<dbReference type="Ensembl" id="ENSMUST00000119705.8">
    <molecule id="P61460-1"/>
    <property type="protein sequence ID" value="ENSMUSP00000113862.2"/>
    <property type="gene ID" value="ENSMUSG00000037426.19"/>
</dbReference>
<dbReference type="Ensembl" id="ENSMUST00000120902.8">
    <molecule id="P61460-2"/>
    <property type="protein sequence ID" value="ENSMUSP00000113980.2"/>
    <property type="gene ID" value="ENSMUSG00000037426.19"/>
</dbReference>
<dbReference type="GeneID" id="277854"/>
<dbReference type="KEGG" id="mmu:277854"/>
<dbReference type="UCSC" id="uc008xae.2">
    <molecule id="P61460-1"/>
    <property type="organism name" value="mouse"/>
</dbReference>
<dbReference type="UCSC" id="uc008xaf.2">
    <molecule id="P61460-2"/>
    <property type="organism name" value="mouse"/>
</dbReference>
<dbReference type="AGR" id="MGI:2141101"/>
<dbReference type="CTD" id="9681"/>
<dbReference type="MGI" id="MGI:2141101">
    <property type="gene designation" value="Depdc5"/>
</dbReference>
<dbReference type="VEuPathDB" id="HostDB:ENSMUSG00000037426"/>
<dbReference type="eggNOG" id="KOG3572">
    <property type="taxonomic scope" value="Eukaryota"/>
</dbReference>
<dbReference type="GeneTree" id="ENSGT00390000016559"/>
<dbReference type="InParanoid" id="P61460"/>
<dbReference type="OMA" id="SWMNATP"/>
<dbReference type="OrthoDB" id="39497at2759"/>
<dbReference type="PhylomeDB" id="P61460"/>
<dbReference type="Reactome" id="R-MMU-9639288">
    <property type="pathway name" value="Amino acids regulate mTORC1"/>
</dbReference>
<dbReference type="BioGRID-ORCS" id="277854">
    <property type="hits" value="8 hits in 78 CRISPR screens"/>
</dbReference>
<dbReference type="ChiTaRS" id="Depdc5">
    <property type="organism name" value="mouse"/>
</dbReference>
<dbReference type="PRO" id="PR:P61460"/>
<dbReference type="Proteomes" id="UP000000589">
    <property type="component" value="Chromosome 5"/>
</dbReference>
<dbReference type="RNAct" id="P61460">
    <property type="molecule type" value="protein"/>
</dbReference>
<dbReference type="Bgee" id="ENSMUSG00000037426">
    <property type="expression patterns" value="Expressed in spermatocyte and 212 other cell types or tissues"/>
</dbReference>
<dbReference type="ExpressionAtlas" id="P61460">
    <property type="expression patterns" value="baseline and differential"/>
</dbReference>
<dbReference type="GO" id="GO:0031463">
    <property type="term" value="C:Cul3-RING ubiquitin ligase complex"/>
    <property type="evidence" value="ECO:0007669"/>
    <property type="project" value="Ensembl"/>
</dbReference>
<dbReference type="GO" id="GO:0005829">
    <property type="term" value="C:cytosol"/>
    <property type="evidence" value="ECO:0000314"/>
    <property type="project" value="UniProtKB"/>
</dbReference>
<dbReference type="GO" id="GO:1990130">
    <property type="term" value="C:GATOR1 complex"/>
    <property type="evidence" value="ECO:0000250"/>
    <property type="project" value="UniProtKB"/>
</dbReference>
<dbReference type="GO" id="GO:0005765">
    <property type="term" value="C:lysosomal membrane"/>
    <property type="evidence" value="ECO:0000250"/>
    <property type="project" value="UniProtKB"/>
</dbReference>
<dbReference type="GO" id="GO:0048471">
    <property type="term" value="C:perinuclear region of cytoplasm"/>
    <property type="evidence" value="ECO:0000314"/>
    <property type="project" value="UniProtKB"/>
</dbReference>
<dbReference type="GO" id="GO:0005096">
    <property type="term" value="F:GTPase activator activity"/>
    <property type="evidence" value="ECO:0007669"/>
    <property type="project" value="UniProtKB-KW"/>
</dbReference>
<dbReference type="GO" id="GO:0044877">
    <property type="term" value="F:protein-containing complex binding"/>
    <property type="evidence" value="ECO:0007669"/>
    <property type="project" value="Ensembl"/>
</dbReference>
<dbReference type="GO" id="GO:0031267">
    <property type="term" value="F:small GTPase binding"/>
    <property type="evidence" value="ECO:0000250"/>
    <property type="project" value="UniProtKB"/>
</dbReference>
<dbReference type="GO" id="GO:0034198">
    <property type="term" value="P:cellular response to amino acid starvation"/>
    <property type="evidence" value="ECO:0000250"/>
    <property type="project" value="UniProtKB"/>
</dbReference>
<dbReference type="GO" id="GO:0035556">
    <property type="term" value="P:intracellular signal transduction"/>
    <property type="evidence" value="ECO:0007669"/>
    <property type="project" value="InterPro"/>
</dbReference>
<dbReference type="GO" id="GO:1904262">
    <property type="term" value="P:negative regulation of TORC1 signaling"/>
    <property type="evidence" value="ECO:0000250"/>
    <property type="project" value="UniProtKB"/>
</dbReference>
<dbReference type="CDD" id="cd04449">
    <property type="entry name" value="DEP_DEPDC5-like"/>
    <property type="match status" value="1"/>
</dbReference>
<dbReference type="FunFam" id="1.10.10.10:FF:000171">
    <property type="entry name" value="DEP domain-containing protein 5 isoform X2"/>
    <property type="match status" value="1"/>
</dbReference>
<dbReference type="Gene3D" id="1.10.10.10">
    <property type="entry name" value="Winged helix-like DNA-binding domain superfamily/Winged helix DNA-binding domain"/>
    <property type="match status" value="1"/>
</dbReference>
<dbReference type="InterPro" id="IPR000591">
    <property type="entry name" value="DEP_dom"/>
</dbReference>
<dbReference type="InterPro" id="IPR045838">
    <property type="entry name" value="DEPDC5_CTD"/>
</dbReference>
<dbReference type="InterPro" id="IPR027244">
    <property type="entry name" value="IML1"/>
</dbReference>
<dbReference type="InterPro" id="IPR055213">
    <property type="entry name" value="IML1_double_psi_beta_barrel"/>
</dbReference>
<dbReference type="InterPro" id="IPR048255">
    <property type="entry name" value="IML1_N"/>
</dbReference>
<dbReference type="InterPro" id="IPR036388">
    <property type="entry name" value="WH-like_DNA-bd_sf"/>
</dbReference>
<dbReference type="InterPro" id="IPR036390">
    <property type="entry name" value="WH_DNA-bd_sf"/>
</dbReference>
<dbReference type="PANTHER" id="PTHR13179">
    <property type="entry name" value="DEP DOMAIN CONTAINING PROTEIN 5"/>
    <property type="match status" value="1"/>
</dbReference>
<dbReference type="PANTHER" id="PTHR13179:SF8">
    <property type="entry name" value="GATOR COMPLEX PROTEIN DEPDC5"/>
    <property type="match status" value="1"/>
</dbReference>
<dbReference type="Pfam" id="PF00610">
    <property type="entry name" value="DEP"/>
    <property type="match status" value="1"/>
</dbReference>
<dbReference type="Pfam" id="PF19418">
    <property type="entry name" value="DEPDC5_CTD"/>
    <property type="match status" value="1"/>
</dbReference>
<dbReference type="Pfam" id="PF12257">
    <property type="entry name" value="IML1"/>
    <property type="match status" value="1"/>
</dbReference>
<dbReference type="Pfam" id="PF23013">
    <property type="entry name" value="IML1_N"/>
    <property type="match status" value="1"/>
</dbReference>
<dbReference type="SMART" id="SM00049">
    <property type="entry name" value="DEP"/>
    <property type="match status" value="1"/>
</dbReference>
<dbReference type="SUPFAM" id="SSF46785">
    <property type="entry name" value="Winged helix' DNA-binding domain"/>
    <property type="match status" value="1"/>
</dbReference>
<dbReference type="PROSITE" id="PS50186">
    <property type="entry name" value="DEP"/>
    <property type="match status" value="1"/>
</dbReference>
<gene>
    <name evidence="9" type="primary">Depdc5</name>
    <name evidence="8" type="synonym">Kiaa0645</name>
</gene>
<proteinExistence type="evidence at protein level"/>
<protein>
    <recommendedName>
        <fullName evidence="7">GATOR1 complex protein DEPDC5</fullName>
    </recommendedName>
    <alternativeName>
        <fullName evidence="9">DEP domain-containing protein 5</fullName>
    </alternativeName>
</protein>
<comment type="function">
    <text evidence="1 5">As a component of the GATOR1 complex functions as an inhibitor of the amino acid-sensing branch of the mTORC1 pathway (PubMed:31548394). In response to amino acid depletion, the GATOR1 complex has GTPase activating protein (GAP) activity and strongly increases GTP hydrolysis by RagA/RRAGA (or RagB/RRAGB) within heterodimeric Rag complexes, thereby turning them into their inactive GDP-bound form, releasing mTORC1 from lysosomal surface and inhibiting mTORC1 signaling (By similarity). In the presence of abundant amino acids, the GATOR1 complex is negatively regulated by GATOR2, the other GATOR subcomplex, in this amino acid-sensing branch of the TORC1 pathway (By similarity). Within the GATOR1 complex, DEPDC5 mediates direct interaction with the nucleotide-binding pocket of small GTPases Rag (RagA/RRAGA, RagB/RRAGB, RagC/RRAGC and/or RagD/RRAGD) and coordinates their nucleotide loading states by promoting RagA/RRAGA or RagB/RRAGB into their GDP-binding state and RagC/RRAGC or RagD/RRAGD into their GTP-binding state (By similarity). However, it does not execute the GAP activity, which is mediated by NPRL2 (By similarity).</text>
</comment>
<comment type="subunit">
    <text evidence="1">Within the GATOR complex, component of the GATOR1 subcomplex, made of DEPDC5, NPRL2 and NPRL3. GATOR1 mediates the strong interaction of the GATOR complex with small GTPases Rag (RagA/RRAGA, RagB/RRAGB, RagC/RRAGC and/or RagD/RRAGD) heterodimers. GATOR1 interacts with GPR155/LYCHOS; interaction takes place in presence of cholesterol and prevents interaction between GATOR1 and KICSTOR. Interacts with SAMTOR; interaction is direct and takes place in presence of methionine, leading to inhibit the activity of the GATOR1 complex.</text>
</comment>
<comment type="subcellular location">
    <subcellularLocation>
        <location evidence="1">Lysosome membrane</location>
    </subcellularLocation>
    <subcellularLocation>
        <location evidence="4">Cytoplasm</location>
        <location evidence="4">Cytosol</location>
    </subcellularLocation>
    <subcellularLocation>
        <location evidence="4">Cytoplasm</location>
        <location evidence="4">Perinuclear region</location>
    </subcellularLocation>
    <text evidence="1">Localization to lysosomes is mediated by the KICSTOR complex and is amino acid-independent.</text>
</comment>
<comment type="alternative products">
    <event type="alternative splicing"/>
    <isoform>
        <id>P61460-1</id>
        <name>1</name>
        <sequence type="displayed"/>
    </isoform>
    <isoform>
        <id>P61460-2</id>
        <name>2</name>
        <sequence type="described" ref="VSP_046542"/>
    </isoform>
</comment>
<comment type="tissue specificity">
    <text evidence="4">Expressed at low levels in all brain regions. Expressed throughout brain development, including in midgestation embryonic head (11.5 dpc), neonatal brain and whole adult brain. Present in neurons and absent in non-neuronal cells, including astrocytes (at protein level).</text>
</comment>
<comment type="domain">
    <text evidence="1">The DEP domain mediates the interaction with KLHL22.</text>
</comment>
<comment type="PTM">
    <text evidence="5">Phosphorylation at Ser-992 and Ser-1518 by AKT1 and PIM1 inhibit the activity of DEPDC5, releasing inhibition of the mTORC1 pathway.</text>
</comment>
<comment type="PTM">
    <text evidence="1">Ubiquitinated. Amino acid-induced 'Lys-48'-linked polyubiquitination of DEPDC5 by the BCR(KLHL22) ubiquitin ligase complex leads to DEPDC5 proteasomal degradation and inhibition of the GATOR1 complex. Ubiquitination may occur at multiple lysines.</text>
</comment>
<comment type="similarity">
    <text evidence="7">Belongs to the IML1 family.</text>
</comment>
<comment type="sequence caution" evidence="7">
    <conflict type="erroneous initiation">
        <sequence resource="EMBL-CDS" id="BAC97990"/>
    </conflict>
    <text>Extended N-terminus.</text>
</comment>
<sequence>MRTTKVYKLVIHKKGFGGSDDELVVNPKVFPHIKLGDIVEIAHPNDEYSPLLLQVKSLKEDLQKETISVDQTVTQVFRLRPYQDVYVNVVDPKDVTLDLVELTFKDQYIGRGDMWRLKKSLVSTCAYITQKVEFAGIRAQAGELWVKNEKVMCGYISEETRVVFRSTSAMVYIFIQMSCEMWDFDIYGDLYFEKAVNGFLADLFTKWKEKNCSHEVTVVLFSRTFYDAKSIDEFPEINRASIQEDHKGRFYEDFYKVVVQNERREEWTSLLVTIKKLFIQYPVLVRLEQAGGFPQGDNSTSAQGNYLEAINLSFNVFDKHYINRNFDRTGQMSVVITPGVGVFEVDRLLMILTKQRMIDNGIGVDLVCMGEQPLHAVPLFKLHNRSVPRDSRLGDDYNIPHWINHSFYTSKSQLFCNSFTPRIKLAGKKSASEKTKNGRDTSLGTPKESENTLPIQVDYDAYDAQVFRLPGPSRAQRLATCRSVREQENHSRKSASSCDVSSSPSLPSRALPTEEVRSQASDDSSLGKSTNILMIPNPHLHQYEVSSSLGYTSTRDVLENMIEPPQRDSSAPGRFHVGSAESMLHVRPGGYTPQRALINPFAPSRMPMKLTSNRRRWMHTFPVGPSGEAIQIHHQTRQNMAELQGSRQRDPTHSSAELLELAYHEAAGRHSTSRQPGDSMSLNFSGTEELSVSLLSNSSTGVNPRTQNKDSLEDSVSTSPDPMPGFCCTVGVDWKSLTTPACLPLTTDYFPDRQGLQNDYTEGCYDLLPEADMDRRDEEGVQMTAQQVFEEFICQRLMQGYQIIVQPKTQKPNTTVPPPLSSSPLYSRGLVSRNRPEEEGQYWLSMGRTFHKVTLKDKMITVTRYLPKYPYESAQIHYTYSLCPSHSDSEFVSCWVDFCHERLEEYKWNYLDQYICSAGSEDFSLIESLKFWRTRFLLLPACVTATKRITEGEVHCDIYGDKPRADEDEWQLLDGFIRFVEGLNRIRRRHRSDRMIRKGTAMKGLQMTGPISAHSLEAAGPPVGKKGTSALSALLEMEASQKSLGEQQTTVHGKSSTQPAENSSVAMTPTYVDSPRKDGAFFMEFVRSPRTASSAFYPQASVDQTAPLVLDSTSLGVSTGQPMDRGNNQTFGNSQNIEQAFPSANSGDYSSQQHVASSLTSSSTLVEILEAMKHPSTGVQLLSEQKGLSPCCFISAEVVHWLMNNVEGVQTQAMGIDIMQKMLEEQLITHASGEAWRTFIYGFYFYKIVMDKEPERVAMQQPSAPWYTAGADDFASFQRKWFEVAFVAEELVHSEIPAFLLPWLPSRPASYASRHSSFSRSFGGRSQAAALLAATVPEQRTVTLDVDVNNRTDRLEWCSCYYHGNFSLNAAFEIKLHWMAVTATVLFEMVQGWHRKATSCGFLLVPVLEGPFALPSYLYGDPLRAQLFIPLNLSCLLKEGSEHLFDSFEPETYWDRMHLFQEAIAHRFGFVQDKYSVSAFNFPAENKPQYIHVTGTVFLQLPYSKRKFSGQQRRRRNSTSSTNQNMFCEERVGYNWAYNTMLTKTWRSSATGDEKFADRLLKDFTDFCINRDNRLVTFWTNCLEKMHASAP</sequence>
<accession>P61460</accession>
<accession>E9Q5J2</accession>
<accession>E9Q5Y0</accession>
<organism>
    <name type="scientific">Mus musculus</name>
    <name type="common">Mouse</name>
    <dbReference type="NCBI Taxonomy" id="10090"/>
    <lineage>
        <taxon>Eukaryota</taxon>
        <taxon>Metazoa</taxon>
        <taxon>Chordata</taxon>
        <taxon>Craniata</taxon>
        <taxon>Vertebrata</taxon>
        <taxon>Euteleostomi</taxon>
        <taxon>Mammalia</taxon>
        <taxon>Eutheria</taxon>
        <taxon>Euarchontoglires</taxon>
        <taxon>Glires</taxon>
        <taxon>Rodentia</taxon>
        <taxon>Myomorpha</taxon>
        <taxon>Muroidea</taxon>
        <taxon>Muridae</taxon>
        <taxon>Murinae</taxon>
        <taxon>Mus</taxon>
        <taxon>Mus</taxon>
    </lineage>
</organism>
<evidence type="ECO:0000250" key="1">
    <source>
        <dbReference type="UniProtKB" id="O75140"/>
    </source>
</evidence>
<evidence type="ECO:0000255" key="2">
    <source>
        <dbReference type="PROSITE-ProRule" id="PRU00066"/>
    </source>
</evidence>
<evidence type="ECO:0000256" key="3">
    <source>
        <dbReference type="SAM" id="MobiDB-lite"/>
    </source>
</evidence>
<evidence type="ECO:0000269" key="4">
    <source>
    </source>
</evidence>
<evidence type="ECO:0000269" key="5">
    <source>
    </source>
</evidence>
<evidence type="ECO:0000303" key="6">
    <source>
    </source>
</evidence>
<evidence type="ECO:0000305" key="7"/>
<evidence type="ECO:0000312" key="8">
    <source>
        <dbReference type="EMBL" id="BAC97990.1"/>
    </source>
</evidence>
<evidence type="ECO:0000312" key="9">
    <source>
        <dbReference type="MGI" id="MGI:2141101"/>
    </source>
</evidence>
<keyword id="KW-0025">Alternative splicing</keyword>
<keyword id="KW-0963">Cytoplasm</keyword>
<keyword id="KW-0343">GTPase activation</keyword>
<keyword id="KW-0458">Lysosome</keyword>
<keyword id="KW-0472">Membrane</keyword>
<keyword id="KW-0597">Phosphoprotein</keyword>
<keyword id="KW-1185">Reference proteome</keyword>
<keyword id="KW-0832">Ubl conjugation</keyword>
<feature type="chain" id="PRO_0000079866" description="GATOR1 complex protein DEPDC5">
    <location>
        <begin position="1"/>
        <end position="1591"/>
    </location>
</feature>
<feature type="domain" description="DEP" evidence="2">
    <location>
        <begin position="1175"/>
        <end position="1250"/>
    </location>
</feature>
<feature type="region of interest" description="Disordered" evidence="3">
    <location>
        <begin position="427"/>
        <end position="455"/>
    </location>
</feature>
<feature type="region of interest" description="Disordered" evidence="3">
    <location>
        <begin position="478"/>
        <end position="532"/>
    </location>
</feature>
<feature type="region of interest" description="Disordered" evidence="3">
    <location>
        <begin position="695"/>
        <end position="720"/>
    </location>
</feature>
<feature type="region of interest" description="Disordered" evidence="3">
    <location>
        <begin position="1040"/>
        <end position="1064"/>
    </location>
</feature>
<feature type="region of interest" description="Disordered" evidence="3">
    <location>
        <begin position="1118"/>
        <end position="1153"/>
    </location>
</feature>
<feature type="compositionally biased region" description="Basic and acidic residues" evidence="3">
    <location>
        <begin position="430"/>
        <end position="439"/>
    </location>
</feature>
<feature type="compositionally biased region" description="Low complexity" evidence="3">
    <location>
        <begin position="494"/>
        <end position="508"/>
    </location>
</feature>
<feature type="compositionally biased region" description="Polar residues" evidence="3">
    <location>
        <begin position="518"/>
        <end position="532"/>
    </location>
</feature>
<feature type="compositionally biased region" description="Polar residues" evidence="3">
    <location>
        <begin position="1118"/>
        <end position="1149"/>
    </location>
</feature>
<feature type="modified residue" description="Phosphoserine" evidence="1">
    <location>
        <position position="505"/>
    </location>
</feature>
<feature type="modified residue" description="Phosphoserine" evidence="1">
    <location>
        <position position="992"/>
    </location>
</feature>
<feature type="modified residue" description="Phosphoserine" evidence="5">
    <location>
        <position position="1518"/>
    </location>
</feature>
<feature type="splice variant" id="VSP_046542" description="In isoform 2." evidence="6">
    <location>
        <begin position="1078"/>
        <end position="1099"/>
    </location>
</feature>
<feature type="mutagenesis site" description="Mimics phosphorylation; knockin mice show a significant level of resistance to PIM1 inhibitors." evidence="5">
    <original>S</original>
    <variation>E</variation>
    <location>
        <position position="1518"/>
    </location>
</feature>
<feature type="sequence conflict" description="In Ref. 1; BAC97990." evidence="7" ref="1">
    <original>DQYIGRGDMWRLKKSLVSTCAYITQKVEFAGIRAQAGELWVKNEKVMCGYISEETR</original>
    <variation>LCLYHSKSGICWHQ</variation>
    <location>
        <begin position="106"/>
        <end position="161"/>
    </location>
</feature>
<feature type="sequence conflict" description="In Ref. 1; BAC97990." evidence="7" ref="1">
    <original>AA</original>
    <variation>ST</variation>
    <location>
        <begin position="1018"/>
        <end position="1019"/>
    </location>
</feature>
<reference key="1">
    <citation type="journal article" date="2003" name="DNA Res.">
        <title>Prediction of the coding sequences of mouse homologues of KIAA gene: III. The complete nucleotide sequences of 500 mouse KIAA-homologous cDNAs identified by screening of terminal sequences of cDNA clones randomly sampled from size-fractionated libraries.</title>
        <authorList>
            <person name="Okazaki N."/>
            <person name="Kikuno R."/>
            <person name="Ohara R."/>
            <person name="Inamoto S."/>
            <person name="Koseki H."/>
            <person name="Hiraoka S."/>
            <person name="Saga Y."/>
            <person name="Nagase T."/>
            <person name="Ohara O."/>
            <person name="Koga H."/>
        </authorList>
    </citation>
    <scope>NUCLEOTIDE SEQUENCE [LARGE SCALE MRNA] (ISOFORM 2)</scope>
    <source>
        <tissue>Brain</tissue>
    </source>
</reference>
<reference key="2">
    <citation type="journal article" date="2009" name="PLoS Biol.">
        <title>Lineage-specific biology revealed by a finished genome assembly of the mouse.</title>
        <authorList>
            <person name="Church D.M."/>
            <person name="Goodstadt L."/>
            <person name="Hillier L.W."/>
            <person name="Zody M.C."/>
            <person name="Goldstein S."/>
            <person name="She X."/>
            <person name="Bult C.J."/>
            <person name="Agarwala R."/>
            <person name="Cherry J.L."/>
            <person name="DiCuccio M."/>
            <person name="Hlavina W."/>
            <person name="Kapustin Y."/>
            <person name="Meric P."/>
            <person name="Maglott D."/>
            <person name="Birtle Z."/>
            <person name="Marques A.C."/>
            <person name="Graves T."/>
            <person name="Zhou S."/>
            <person name="Teague B."/>
            <person name="Potamousis K."/>
            <person name="Churas C."/>
            <person name="Place M."/>
            <person name="Herschleb J."/>
            <person name="Runnheim R."/>
            <person name="Forrest D."/>
            <person name="Amos-Landgraf J."/>
            <person name="Schwartz D.C."/>
            <person name="Cheng Z."/>
            <person name="Lindblad-Toh K."/>
            <person name="Eichler E.E."/>
            <person name="Ponting C.P."/>
        </authorList>
    </citation>
    <scope>NUCLEOTIDE SEQUENCE [LARGE SCALE GENOMIC DNA]</scope>
    <source>
        <strain>C57BL/6J</strain>
    </source>
</reference>
<reference key="3">
    <citation type="journal article" date="2010" name="Cell">
        <title>A tissue-specific atlas of mouse protein phosphorylation and expression.</title>
        <authorList>
            <person name="Huttlin E.L."/>
            <person name="Jedrychowski M.P."/>
            <person name="Elias J.E."/>
            <person name="Goswami T."/>
            <person name="Rad R."/>
            <person name="Beausoleil S.A."/>
            <person name="Villen J."/>
            <person name="Haas W."/>
            <person name="Sowa M.E."/>
            <person name="Gygi S.P."/>
        </authorList>
    </citation>
    <scope>IDENTIFICATION BY MASS SPECTROMETRY [LARGE SCALE ANALYSIS]</scope>
    <source>
        <tissue>Brain</tissue>
        <tissue>Kidney</tissue>
        <tissue>Testis</tissue>
    </source>
</reference>
<reference key="4">
    <citation type="journal article" date="2013" name="Nat. Genet.">
        <title>Mutations in DEPDC5 cause familial focal epilepsy with variable foci.</title>
        <authorList>
            <person name="Dibbens L.M."/>
            <person name="de Vries B."/>
            <person name="Donatello S."/>
            <person name="Heron S.E."/>
            <person name="Hodgson B.L."/>
            <person name="Chintawar S."/>
            <person name="Crompton D.E."/>
            <person name="Hughes J.N."/>
            <person name="Bellows S.T."/>
            <person name="Klein K.M."/>
            <person name="Callenbach P.M."/>
            <person name="Corbett M.A."/>
            <person name="Gardner A.E."/>
            <person name="Kivity S."/>
            <person name="Iona X."/>
            <person name="Regan B.M."/>
            <person name="Weller C.M."/>
            <person name="Crimmins D."/>
            <person name="O'Brien T.J."/>
            <person name="Guerrero-Lopez R."/>
            <person name="Mulley J.C."/>
            <person name="Dubeau F."/>
            <person name="Licchetta L."/>
            <person name="Bisulli F."/>
            <person name="Cossette P."/>
            <person name="Thomas P.Q."/>
            <person name="Gecz J."/>
            <person name="Serratosa J."/>
            <person name="Brouwer O.F."/>
            <person name="Andermann F."/>
            <person name="Andermann E."/>
            <person name="van den Maagdenberg A.M."/>
            <person name="Pandolfo M."/>
            <person name="Berkovic S.F."/>
            <person name="Scheffer I.E."/>
        </authorList>
    </citation>
    <scope>SUBCELLULAR LOCATION</scope>
    <scope>TISSUE SPECIFICITY</scope>
</reference>
<reference key="5">
    <citation type="journal article" date="2019" name="Proc. Natl. Acad. Sci. U.S.A.">
        <title>Phosphorylation of DEPDC5, a component of the GATOR1 complex, releases inhibition of mTORC1 and promotes tumor growth.</title>
        <authorList>
            <person name="Padi S.K.R."/>
            <person name="Singh N."/>
            <person name="Bearss J.J."/>
            <person name="Olive V."/>
            <person name="Song J.H."/>
            <person name="Cardo-Vila M."/>
            <person name="Kraft A.S."/>
            <person name="Okumura K."/>
        </authorList>
    </citation>
    <scope>FUNCTION</scope>
    <scope>PHOSPHORYLATION AT SER-1518</scope>
    <scope>MUTAGENESIS OF SER-1518</scope>
</reference>
<name>DEPD5_MOUSE</name>